<name>DNLJ_MYCAP</name>
<keyword id="KW-0227">DNA damage</keyword>
<keyword id="KW-0234">DNA repair</keyword>
<keyword id="KW-0235">DNA replication</keyword>
<keyword id="KW-0436">Ligase</keyword>
<keyword id="KW-0460">Magnesium</keyword>
<keyword id="KW-0464">Manganese</keyword>
<keyword id="KW-0479">Metal-binding</keyword>
<keyword id="KW-0520">NAD</keyword>
<keyword id="KW-1185">Reference proteome</keyword>
<keyword id="KW-0862">Zinc</keyword>
<feature type="chain" id="PRO_0000380425" description="DNA ligase">
    <location>
        <begin position="1"/>
        <end position="654"/>
    </location>
</feature>
<feature type="domain" description="BRCT" evidence="1">
    <location>
        <begin position="577"/>
        <end position="654"/>
    </location>
</feature>
<feature type="active site" description="N6-AMP-lysine intermediate" evidence="1">
    <location>
        <position position="116"/>
    </location>
</feature>
<feature type="binding site" evidence="1">
    <location>
        <begin position="34"/>
        <end position="38"/>
    </location>
    <ligand>
        <name>NAD(+)</name>
        <dbReference type="ChEBI" id="CHEBI:57540"/>
    </ligand>
</feature>
<feature type="binding site" evidence="1">
    <location>
        <begin position="83"/>
        <end position="84"/>
    </location>
    <ligand>
        <name>NAD(+)</name>
        <dbReference type="ChEBI" id="CHEBI:57540"/>
    </ligand>
</feature>
<feature type="binding site" evidence="1">
    <location>
        <position position="114"/>
    </location>
    <ligand>
        <name>NAD(+)</name>
        <dbReference type="ChEBI" id="CHEBI:57540"/>
    </ligand>
</feature>
<feature type="binding site" evidence="1">
    <location>
        <position position="137"/>
    </location>
    <ligand>
        <name>NAD(+)</name>
        <dbReference type="ChEBI" id="CHEBI:57540"/>
    </ligand>
</feature>
<feature type="binding site" evidence="1">
    <location>
        <position position="171"/>
    </location>
    <ligand>
        <name>NAD(+)</name>
        <dbReference type="ChEBI" id="CHEBI:57540"/>
    </ligand>
</feature>
<feature type="binding site" evidence="1">
    <location>
        <position position="280"/>
    </location>
    <ligand>
        <name>NAD(+)</name>
        <dbReference type="ChEBI" id="CHEBI:57540"/>
    </ligand>
</feature>
<feature type="binding site" evidence="1">
    <location>
        <position position="304"/>
    </location>
    <ligand>
        <name>NAD(+)</name>
        <dbReference type="ChEBI" id="CHEBI:57540"/>
    </ligand>
</feature>
<feature type="binding site" evidence="1">
    <location>
        <position position="396"/>
    </location>
    <ligand>
        <name>Zn(2+)</name>
        <dbReference type="ChEBI" id="CHEBI:29105"/>
    </ligand>
</feature>
<feature type="binding site" evidence="1">
    <location>
        <position position="399"/>
    </location>
    <ligand>
        <name>Zn(2+)</name>
        <dbReference type="ChEBI" id="CHEBI:29105"/>
    </ligand>
</feature>
<feature type="binding site" evidence="1">
    <location>
        <position position="414"/>
    </location>
    <ligand>
        <name>Zn(2+)</name>
        <dbReference type="ChEBI" id="CHEBI:29105"/>
    </ligand>
</feature>
<feature type="binding site" evidence="1">
    <location>
        <position position="419"/>
    </location>
    <ligand>
        <name>Zn(2+)</name>
        <dbReference type="ChEBI" id="CHEBI:29105"/>
    </ligand>
</feature>
<reference key="1">
    <citation type="journal article" date="2007" name="PLoS Genet.">
        <title>Being pathogenic, plastic, and sexual while living with a nearly minimal bacterial genome.</title>
        <authorList>
            <person name="Sirand-Pugnet P."/>
            <person name="Lartigue C."/>
            <person name="Marenda M."/>
            <person name="Jacob D."/>
            <person name="Barre A."/>
            <person name="Barbe V."/>
            <person name="Schenowitz C."/>
            <person name="Mangenot S."/>
            <person name="Couloux A."/>
            <person name="Segurens B."/>
            <person name="de Daruvar A."/>
            <person name="Blanchard A."/>
            <person name="Citti C."/>
        </authorList>
    </citation>
    <scope>NUCLEOTIDE SEQUENCE [LARGE SCALE GENOMIC DNA]</scope>
    <source>
        <strain>NCTC 10123 / CIP 59.7 / PG2</strain>
    </source>
</reference>
<dbReference type="EC" id="6.5.1.2" evidence="1"/>
<dbReference type="EMBL" id="CU179680">
    <property type="protein sequence ID" value="CAL58980.1"/>
    <property type="molecule type" value="Genomic_DNA"/>
</dbReference>
<dbReference type="RefSeq" id="WP_011949458.1">
    <property type="nucleotide sequence ID" value="NC_009497.1"/>
</dbReference>
<dbReference type="SMR" id="A5IY71"/>
<dbReference type="STRING" id="347257.MAG2820"/>
<dbReference type="GeneID" id="93358045"/>
<dbReference type="KEGG" id="maa:MAG2820"/>
<dbReference type="HOGENOM" id="CLU_007764_2_0_14"/>
<dbReference type="Proteomes" id="UP000007065">
    <property type="component" value="Chromosome"/>
</dbReference>
<dbReference type="GO" id="GO:0005829">
    <property type="term" value="C:cytosol"/>
    <property type="evidence" value="ECO:0007669"/>
    <property type="project" value="TreeGrafter"/>
</dbReference>
<dbReference type="GO" id="GO:0003911">
    <property type="term" value="F:DNA ligase (NAD+) activity"/>
    <property type="evidence" value="ECO:0007669"/>
    <property type="project" value="UniProtKB-UniRule"/>
</dbReference>
<dbReference type="GO" id="GO:0046872">
    <property type="term" value="F:metal ion binding"/>
    <property type="evidence" value="ECO:0007669"/>
    <property type="project" value="UniProtKB-KW"/>
</dbReference>
<dbReference type="GO" id="GO:0006281">
    <property type="term" value="P:DNA repair"/>
    <property type="evidence" value="ECO:0007669"/>
    <property type="project" value="UniProtKB-KW"/>
</dbReference>
<dbReference type="GO" id="GO:0006260">
    <property type="term" value="P:DNA replication"/>
    <property type="evidence" value="ECO:0007669"/>
    <property type="project" value="UniProtKB-KW"/>
</dbReference>
<dbReference type="CDD" id="cd00114">
    <property type="entry name" value="LIGANc"/>
    <property type="match status" value="1"/>
</dbReference>
<dbReference type="Gene3D" id="1.10.150.20">
    <property type="entry name" value="5' to 3' exonuclease, C-terminal subdomain"/>
    <property type="match status" value="2"/>
</dbReference>
<dbReference type="Gene3D" id="3.40.50.10190">
    <property type="entry name" value="BRCT domain"/>
    <property type="match status" value="1"/>
</dbReference>
<dbReference type="Gene3D" id="3.30.470.30">
    <property type="entry name" value="DNA ligase/mRNA capping enzyme"/>
    <property type="match status" value="1"/>
</dbReference>
<dbReference type="Gene3D" id="1.10.287.610">
    <property type="entry name" value="Helix hairpin bin"/>
    <property type="match status" value="1"/>
</dbReference>
<dbReference type="Gene3D" id="2.40.50.140">
    <property type="entry name" value="Nucleic acid-binding proteins"/>
    <property type="match status" value="1"/>
</dbReference>
<dbReference type="HAMAP" id="MF_01588">
    <property type="entry name" value="DNA_ligase_A"/>
    <property type="match status" value="1"/>
</dbReference>
<dbReference type="InterPro" id="IPR001357">
    <property type="entry name" value="BRCT_dom"/>
</dbReference>
<dbReference type="InterPro" id="IPR036420">
    <property type="entry name" value="BRCT_dom_sf"/>
</dbReference>
<dbReference type="InterPro" id="IPR041663">
    <property type="entry name" value="DisA/LigA_HHH"/>
</dbReference>
<dbReference type="InterPro" id="IPR001679">
    <property type="entry name" value="DNA_ligase"/>
</dbReference>
<dbReference type="InterPro" id="IPR018239">
    <property type="entry name" value="DNA_ligase_AS"/>
</dbReference>
<dbReference type="InterPro" id="IPR013839">
    <property type="entry name" value="DNAligase_adenylation"/>
</dbReference>
<dbReference type="InterPro" id="IPR013840">
    <property type="entry name" value="DNAligase_N"/>
</dbReference>
<dbReference type="InterPro" id="IPR012340">
    <property type="entry name" value="NA-bd_OB-fold"/>
</dbReference>
<dbReference type="InterPro" id="IPR004150">
    <property type="entry name" value="NAD_DNA_ligase_OB"/>
</dbReference>
<dbReference type="InterPro" id="IPR010994">
    <property type="entry name" value="RuvA_2-like"/>
</dbReference>
<dbReference type="InterPro" id="IPR004149">
    <property type="entry name" value="Znf_DNAligase_C4"/>
</dbReference>
<dbReference type="NCBIfam" id="TIGR00575">
    <property type="entry name" value="dnlj"/>
    <property type="match status" value="1"/>
</dbReference>
<dbReference type="NCBIfam" id="NF005932">
    <property type="entry name" value="PRK07956.1"/>
    <property type="match status" value="1"/>
</dbReference>
<dbReference type="PANTHER" id="PTHR23389">
    <property type="entry name" value="CHROMOSOME TRANSMISSION FIDELITY FACTOR 18"/>
    <property type="match status" value="1"/>
</dbReference>
<dbReference type="PANTHER" id="PTHR23389:SF9">
    <property type="entry name" value="DNA LIGASE"/>
    <property type="match status" value="1"/>
</dbReference>
<dbReference type="Pfam" id="PF00533">
    <property type="entry name" value="BRCT"/>
    <property type="match status" value="1"/>
</dbReference>
<dbReference type="Pfam" id="PF01653">
    <property type="entry name" value="DNA_ligase_aden"/>
    <property type="match status" value="1"/>
</dbReference>
<dbReference type="Pfam" id="PF03120">
    <property type="entry name" value="DNA_ligase_OB"/>
    <property type="match status" value="1"/>
</dbReference>
<dbReference type="Pfam" id="PF03119">
    <property type="entry name" value="DNA_ligase_ZBD"/>
    <property type="match status" value="1"/>
</dbReference>
<dbReference type="Pfam" id="PF12826">
    <property type="entry name" value="HHH_2"/>
    <property type="match status" value="1"/>
</dbReference>
<dbReference type="PIRSF" id="PIRSF001604">
    <property type="entry name" value="LigA"/>
    <property type="match status" value="1"/>
</dbReference>
<dbReference type="SMART" id="SM00292">
    <property type="entry name" value="BRCT"/>
    <property type="match status" value="1"/>
</dbReference>
<dbReference type="SMART" id="SM00532">
    <property type="entry name" value="LIGANc"/>
    <property type="match status" value="1"/>
</dbReference>
<dbReference type="SUPFAM" id="SSF52113">
    <property type="entry name" value="BRCT domain"/>
    <property type="match status" value="1"/>
</dbReference>
<dbReference type="SUPFAM" id="SSF56091">
    <property type="entry name" value="DNA ligase/mRNA capping enzyme, catalytic domain"/>
    <property type="match status" value="1"/>
</dbReference>
<dbReference type="SUPFAM" id="SSF50249">
    <property type="entry name" value="Nucleic acid-binding proteins"/>
    <property type="match status" value="1"/>
</dbReference>
<dbReference type="SUPFAM" id="SSF47781">
    <property type="entry name" value="RuvA domain 2-like"/>
    <property type="match status" value="1"/>
</dbReference>
<dbReference type="PROSITE" id="PS50172">
    <property type="entry name" value="BRCT"/>
    <property type="match status" value="1"/>
</dbReference>
<dbReference type="PROSITE" id="PS01055">
    <property type="entry name" value="DNA_LIGASE_N1"/>
    <property type="match status" value="1"/>
</dbReference>
<sequence length="654" mass="74270">MQKEEAKELIKSLVEKINQWNYEYYQLNKPSVSDLEYDKALLELEKLEKEHPDLILSNSPTFRIGSFASEKFTKFVYQKPMLSLAKAYNYDDINSFINNISKIVPTENINFNIEPKIDGLSIALRYKQGKLVKAATRGDGSEGEDVTENIYQIKSIPKLINYFNDLEVRGEVFITKNDFKKINESNNFANARNAASGTLRQLDANIVAERNLSAFLYEIVEPEKHGIYYQHEALEFMKNLDFPTNPFSKVVEIEELEESISDFAEIKNKLDYDADGLVIKLNDLQMWDKLGKTSKFPKHSIAFKYDVEVASSRITDILTSVGRTGKITYIANILPVLLNQTTVKAATLHNHNFIKDMNININDEVNIIKAGEIIPKVISLKEEKNYVDYYKKATNCPSCGSQLVEFEGIVDQFCTNDECPDKNINNIYHFASRNCLNIVGLGLSTVKDFYPKFIKNIKDIFDLHKYRAELIKLPRYRDLKVDNILNSIESAKNKKFSKVIFALGIKHIGQRAAKLIADNYANFAELLDDHNLLKLQNTKNIGPKIIESLIEFISSPANQDLLAFLDAIFNYEGKAKVISTILSGYTFVITGVLSEPRSHFVKLIEEHSGNVSSAISSKTSYLLAGSDAGSKLEKAYKTGTKVINEEQFYDLIKQ</sequence>
<protein>
    <recommendedName>
        <fullName evidence="1">DNA ligase</fullName>
        <ecNumber evidence="1">6.5.1.2</ecNumber>
    </recommendedName>
    <alternativeName>
        <fullName evidence="1">Polydeoxyribonucleotide synthase [NAD(+)]</fullName>
    </alternativeName>
</protein>
<evidence type="ECO:0000255" key="1">
    <source>
        <dbReference type="HAMAP-Rule" id="MF_01588"/>
    </source>
</evidence>
<comment type="function">
    <text evidence="1">DNA ligase that catalyzes the formation of phosphodiester linkages between 5'-phosphoryl and 3'-hydroxyl groups in double-stranded DNA using NAD as a coenzyme and as the energy source for the reaction. It is essential for DNA replication and repair of damaged DNA.</text>
</comment>
<comment type="catalytic activity">
    <reaction evidence="1">
        <text>NAD(+) + (deoxyribonucleotide)n-3'-hydroxyl + 5'-phospho-(deoxyribonucleotide)m = (deoxyribonucleotide)n+m + AMP + beta-nicotinamide D-nucleotide.</text>
        <dbReference type="EC" id="6.5.1.2"/>
    </reaction>
</comment>
<comment type="cofactor">
    <cofactor evidence="1">
        <name>Mg(2+)</name>
        <dbReference type="ChEBI" id="CHEBI:18420"/>
    </cofactor>
    <cofactor evidence="1">
        <name>Mn(2+)</name>
        <dbReference type="ChEBI" id="CHEBI:29035"/>
    </cofactor>
</comment>
<comment type="similarity">
    <text evidence="1">Belongs to the NAD-dependent DNA ligase family. LigA subfamily.</text>
</comment>
<proteinExistence type="inferred from homology"/>
<organism>
    <name type="scientific">Mycoplasmopsis agalactiae (strain NCTC 10123 / CIP 59.7 / PG2)</name>
    <name type="common">Mycoplasma agalactiae</name>
    <dbReference type="NCBI Taxonomy" id="347257"/>
    <lineage>
        <taxon>Bacteria</taxon>
        <taxon>Bacillati</taxon>
        <taxon>Mycoplasmatota</taxon>
        <taxon>Mycoplasmoidales</taxon>
        <taxon>Metamycoplasmataceae</taxon>
        <taxon>Mycoplasmopsis</taxon>
    </lineage>
</organism>
<gene>
    <name evidence="1" type="primary">ligA</name>
    <name type="ordered locus">MAG2820</name>
</gene>
<accession>A5IY71</accession>